<evidence type="ECO:0000255" key="1">
    <source>
        <dbReference type="HAMAP-Rule" id="MF_01186"/>
    </source>
</evidence>
<evidence type="ECO:0000256" key="2">
    <source>
        <dbReference type="SAM" id="MobiDB-lite"/>
    </source>
</evidence>
<dbReference type="EMBL" id="CU928145">
    <property type="protein sequence ID" value="CAU96505.1"/>
    <property type="molecule type" value="Genomic_DNA"/>
</dbReference>
<dbReference type="RefSeq" id="WP_001269673.1">
    <property type="nucleotide sequence ID" value="NZ_CP028304.1"/>
</dbReference>
<dbReference type="SMR" id="B7L9I5"/>
<dbReference type="GeneID" id="93776841"/>
<dbReference type="KEGG" id="eck:EC55989_0633"/>
<dbReference type="HOGENOM" id="CLU_103309_1_1_6"/>
<dbReference type="Proteomes" id="UP000000746">
    <property type="component" value="Chromosome"/>
</dbReference>
<dbReference type="GO" id="GO:0009279">
    <property type="term" value="C:cell outer membrane"/>
    <property type="evidence" value="ECO:0007669"/>
    <property type="project" value="UniProtKB-SubCell"/>
</dbReference>
<dbReference type="GO" id="GO:1990351">
    <property type="term" value="C:transporter complex"/>
    <property type="evidence" value="ECO:0007669"/>
    <property type="project" value="TreeGrafter"/>
</dbReference>
<dbReference type="GO" id="GO:0001530">
    <property type="term" value="F:lipopolysaccharide binding"/>
    <property type="evidence" value="ECO:0007669"/>
    <property type="project" value="TreeGrafter"/>
</dbReference>
<dbReference type="GO" id="GO:0043165">
    <property type="term" value="P:Gram-negative-bacterium-type cell outer membrane assembly"/>
    <property type="evidence" value="ECO:0007669"/>
    <property type="project" value="UniProtKB-UniRule"/>
</dbReference>
<dbReference type="GO" id="GO:0015920">
    <property type="term" value="P:lipopolysaccharide transport"/>
    <property type="evidence" value="ECO:0007669"/>
    <property type="project" value="TreeGrafter"/>
</dbReference>
<dbReference type="FunFam" id="3.30.160.150:FF:000001">
    <property type="entry name" value="LPS-assembly lipoprotein LptE"/>
    <property type="match status" value="1"/>
</dbReference>
<dbReference type="Gene3D" id="3.30.160.150">
    <property type="entry name" value="Lipoprotein like domain"/>
    <property type="match status" value="1"/>
</dbReference>
<dbReference type="HAMAP" id="MF_01186">
    <property type="entry name" value="LPS_assembly_LptE"/>
    <property type="match status" value="1"/>
</dbReference>
<dbReference type="InterPro" id="IPR007485">
    <property type="entry name" value="LPS_assembly_LptE"/>
</dbReference>
<dbReference type="NCBIfam" id="NF008062">
    <property type="entry name" value="PRK10796.1"/>
    <property type="match status" value="1"/>
</dbReference>
<dbReference type="PANTHER" id="PTHR38098">
    <property type="entry name" value="LPS-ASSEMBLY LIPOPROTEIN LPTE"/>
    <property type="match status" value="1"/>
</dbReference>
<dbReference type="PANTHER" id="PTHR38098:SF1">
    <property type="entry name" value="LPS-ASSEMBLY LIPOPROTEIN LPTE"/>
    <property type="match status" value="1"/>
</dbReference>
<dbReference type="Pfam" id="PF04390">
    <property type="entry name" value="LptE"/>
    <property type="match status" value="1"/>
</dbReference>
<dbReference type="PROSITE" id="PS51257">
    <property type="entry name" value="PROKAR_LIPOPROTEIN"/>
    <property type="match status" value="1"/>
</dbReference>
<sequence>MRYLATLLLSLAVLITAGCGWHLRDTTQVPSTMKVMILDSGDPNGPLSRAVRNQLRLNGVELLDKETTRKDVPSLRLGKVSIAKDTASVFRNGQTAEYQMIMTVNATVLIPGRDIYPISAKVFRSFFDNPQMALAKDNEQDMIVKEMYDRAAEQLIRKLPSIRAADIRSDEEQTSTTTDTPATPARVSTTLGN</sequence>
<feature type="signal peptide" evidence="1">
    <location>
        <begin position="1"/>
        <end position="18"/>
    </location>
</feature>
<feature type="chain" id="PRO_1000164474" description="LPS-assembly lipoprotein LptE">
    <location>
        <begin position="19"/>
        <end position="193"/>
    </location>
</feature>
<feature type="region of interest" description="Disordered" evidence="2">
    <location>
        <begin position="166"/>
        <end position="193"/>
    </location>
</feature>
<feature type="compositionally biased region" description="Low complexity" evidence="2">
    <location>
        <begin position="174"/>
        <end position="186"/>
    </location>
</feature>
<feature type="lipid moiety-binding region" description="N-palmitoyl cysteine" evidence="1">
    <location>
        <position position="19"/>
    </location>
</feature>
<feature type="lipid moiety-binding region" description="S-diacylglycerol cysteine" evidence="1">
    <location>
        <position position="19"/>
    </location>
</feature>
<name>LPTE_ECO55</name>
<comment type="function">
    <text evidence="1">Together with LptD, is involved in the assembly of lipopolysaccharide (LPS) at the surface of the outer membrane. Required for the proper assembly of LptD. Binds LPS and may serve as the LPS recognition site at the outer membrane.</text>
</comment>
<comment type="subunit">
    <text evidence="1">Component of the lipopolysaccharide transport and assembly complex. Interacts with LptD.</text>
</comment>
<comment type="subcellular location">
    <subcellularLocation>
        <location evidence="1">Cell outer membrane</location>
        <topology evidence="1">Lipid-anchor</topology>
    </subcellularLocation>
</comment>
<comment type="similarity">
    <text evidence="1">Belongs to the LptE lipoprotein family.</text>
</comment>
<proteinExistence type="inferred from homology"/>
<organism>
    <name type="scientific">Escherichia coli (strain 55989 / EAEC)</name>
    <dbReference type="NCBI Taxonomy" id="585055"/>
    <lineage>
        <taxon>Bacteria</taxon>
        <taxon>Pseudomonadati</taxon>
        <taxon>Pseudomonadota</taxon>
        <taxon>Gammaproteobacteria</taxon>
        <taxon>Enterobacterales</taxon>
        <taxon>Enterobacteriaceae</taxon>
        <taxon>Escherichia</taxon>
    </lineage>
</organism>
<gene>
    <name evidence="1" type="primary">lptE</name>
    <name type="synonym">rlpB</name>
    <name type="ordered locus">EC55989_0633</name>
</gene>
<accession>B7L9I5</accession>
<keyword id="KW-0998">Cell outer membrane</keyword>
<keyword id="KW-0449">Lipoprotein</keyword>
<keyword id="KW-0472">Membrane</keyword>
<keyword id="KW-0564">Palmitate</keyword>
<keyword id="KW-1185">Reference proteome</keyword>
<keyword id="KW-0732">Signal</keyword>
<protein>
    <recommendedName>
        <fullName evidence="1">LPS-assembly lipoprotein LptE</fullName>
    </recommendedName>
</protein>
<reference key="1">
    <citation type="journal article" date="2009" name="PLoS Genet.">
        <title>Organised genome dynamics in the Escherichia coli species results in highly diverse adaptive paths.</title>
        <authorList>
            <person name="Touchon M."/>
            <person name="Hoede C."/>
            <person name="Tenaillon O."/>
            <person name="Barbe V."/>
            <person name="Baeriswyl S."/>
            <person name="Bidet P."/>
            <person name="Bingen E."/>
            <person name="Bonacorsi S."/>
            <person name="Bouchier C."/>
            <person name="Bouvet O."/>
            <person name="Calteau A."/>
            <person name="Chiapello H."/>
            <person name="Clermont O."/>
            <person name="Cruveiller S."/>
            <person name="Danchin A."/>
            <person name="Diard M."/>
            <person name="Dossat C."/>
            <person name="Karoui M.E."/>
            <person name="Frapy E."/>
            <person name="Garry L."/>
            <person name="Ghigo J.M."/>
            <person name="Gilles A.M."/>
            <person name="Johnson J."/>
            <person name="Le Bouguenec C."/>
            <person name="Lescat M."/>
            <person name="Mangenot S."/>
            <person name="Martinez-Jehanne V."/>
            <person name="Matic I."/>
            <person name="Nassif X."/>
            <person name="Oztas S."/>
            <person name="Petit M.A."/>
            <person name="Pichon C."/>
            <person name="Rouy Z."/>
            <person name="Ruf C.S."/>
            <person name="Schneider D."/>
            <person name="Tourret J."/>
            <person name="Vacherie B."/>
            <person name="Vallenet D."/>
            <person name="Medigue C."/>
            <person name="Rocha E.P.C."/>
            <person name="Denamur E."/>
        </authorList>
    </citation>
    <scope>NUCLEOTIDE SEQUENCE [LARGE SCALE GENOMIC DNA]</scope>
    <source>
        <strain>55989 / EAEC</strain>
    </source>
</reference>